<comment type="function">
    <text evidence="2 5">Catalyzes the methyl transfer from S-adenosyl-methionine to the C-24 of lanosterol to form eburicol.</text>
</comment>
<comment type="catalytic activity">
    <reaction evidence="4">
        <text>lanosterol + S-adenosyl-L-methionine = eburicol + S-adenosyl-L-homocysteine + H(+)</text>
        <dbReference type="Rhea" id="RHEA:52652"/>
        <dbReference type="ChEBI" id="CHEBI:15378"/>
        <dbReference type="ChEBI" id="CHEBI:16521"/>
        <dbReference type="ChEBI" id="CHEBI:57856"/>
        <dbReference type="ChEBI" id="CHEBI:59789"/>
        <dbReference type="ChEBI" id="CHEBI:70315"/>
    </reaction>
</comment>
<comment type="pathway">
    <text evidence="5">Steroid metabolism; ergosterol biosynthesis.</text>
</comment>
<comment type="miscellaneous">
    <text evidence="5">In Neurospora, the biosynthesis pathway of the sterol precursors leading to the prevalent sterol ergosterol differs from yeast. The ringsystem of lanosterol in S.cerevisiae is firstly demethylised in three enzymatic steps leading to the intermediate zymosterol and secondly a methyl group is added to zymosterol by the sterol 24-C-methyltransferase to form fecosterol. In Neurospora, lanosterol is firstly transmethylated by the sterol 24-C-methyltransferase leading to the intermediate eburicol and secondly demethylated in three steps to form fecosterol.</text>
</comment>
<comment type="similarity">
    <text evidence="1">Belongs to the class I-like SAM-binding methyltransferase superfamily. Erg6/SMT family.</text>
</comment>
<proteinExistence type="inferred from homology"/>
<accession>Q9P3R1</accession>
<accession>Q1K936</accession>
<protein>
    <recommendedName>
        <fullName evidence="3">Sterol 24-C-methyltransferase erg-4</fullName>
        <ecNumber evidence="4">2.1.1.-</ecNumber>
    </recommendedName>
    <alternativeName>
        <fullName>Delta(24)-sterol C-methyltransferase</fullName>
    </alternativeName>
    <alternativeName>
        <fullName>S-adenosyl-L-methionine:sterol C-24 methyl transferasee</fullName>
        <shortName>SAM:SMT</shortName>
    </alternativeName>
</protein>
<reference key="1">
    <citation type="journal article" date="2003" name="Nucleic Acids Res.">
        <title>What's in the genome of a filamentous fungus? Analysis of the Neurospora genome sequence.</title>
        <authorList>
            <person name="Mannhaupt G."/>
            <person name="Montrone C."/>
            <person name="Haase D."/>
            <person name="Mewes H.-W."/>
            <person name="Aign V."/>
            <person name="Hoheisel J.D."/>
            <person name="Fartmann B."/>
            <person name="Nyakatura G."/>
            <person name="Kempken F."/>
            <person name="Maier J."/>
            <person name="Schulte U."/>
        </authorList>
    </citation>
    <scope>NUCLEOTIDE SEQUENCE [LARGE SCALE GENOMIC DNA]</scope>
    <source>
        <strain>ATCC 24698 / 74-OR23-1A / CBS 708.71 / DSM 1257 / FGSC 987</strain>
    </source>
</reference>
<reference key="2">
    <citation type="journal article" date="2003" name="Nature">
        <title>The genome sequence of the filamentous fungus Neurospora crassa.</title>
        <authorList>
            <person name="Galagan J.E."/>
            <person name="Calvo S.E."/>
            <person name="Borkovich K.A."/>
            <person name="Selker E.U."/>
            <person name="Read N.D."/>
            <person name="Jaffe D.B."/>
            <person name="FitzHugh W."/>
            <person name="Ma L.-J."/>
            <person name="Smirnov S."/>
            <person name="Purcell S."/>
            <person name="Rehman B."/>
            <person name="Elkins T."/>
            <person name="Engels R."/>
            <person name="Wang S."/>
            <person name="Nielsen C.B."/>
            <person name="Butler J."/>
            <person name="Endrizzi M."/>
            <person name="Qui D."/>
            <person name="Ianakiev P."/>
            <person name="Bell-Pedersen D."/>
            <person name="Nelson M.A."/>
            <person name="Werner-Washburne M."/>
            <person name="Selitrennikoff C.P."/>
            <person name="Kinsey J.A."/>
            <person name="Braun E.L."/>
            <person name="Zelter A."/>
            <person name="Schulte U."/>
            <person name="Kothe G.O."/>
            <person name="Jedd G."/>
            <person name="Mewes H.-W."/>
            <person name="Staben C."/>
            <person name="Marcotte E."/>
            <person name="Greenberg D."/>
            <person name="Roy A."/>
            <person name="Foley K."/>
            <person name="Naylor J."/>
            <person name="Stange-Thomann N."/>
            <person name="Barrett R."/>
            <person name="Gnerre S."/>
            <person name="Kamal M."/>
            <person name="Kamvysselis M."/>
            <person name="Mauceli E.W."/>
            <person name="Bielke C."/>
            <person name="Rudd S."/>
            <person name="Frishman D."/>
            <person name="Krystofova S."/>
            <person name="Rasmussen C."/>
            <person name="Metzenberg R.L."/>
            <person name="Perkins D.D."/>
            <person name="Kroken S."/>
            <person name="Cogoni C."/>
            <person name="Macino G."/>
            <person name="Catcheside D.E.A."/>
            <person name="Li W."/>
            <person name="Pratt R.J."/>
            <person name="Osmani S.A."/>
            <person name="DeSouza C.P.C."/>
            <person name="Glass N.L."/>
            <person name="Orbach M.J."/>
            <person name="Berglund J.A."/>
            <person name="Voelker R."/>
            <person name="Yarden O."/>
            <person name="Plamann M."/>
            <person name="Seiler S."/>
            <person name="Dunlap J.C."/>
            <person name="Radford A."/>
            <person name="Aramayo R."/>
            <person name="Natvig D.O."/>
            <person name="Alex L.A."/>
            <person name="Mannhaupt G."/>
            <person name="Ebbole D.J."/>
            <person name="Freitag M."/>
            <person name="Paulsen I."/>
            <person name="Sachs M.S."/>
            <person name="Lander E.S."/>
            <person name="Nusbaum C."/>
            <person name="Birren B.W."/>
        </authorList>
    </citation>
    <scope>NUCLEOTIDE SEQUENCE [LARGE SCALE GENOMIC DNA]</scope>
    <source>
        <strain>ATCC 24698 / 74-OR23-1A / CBS 708.71 / DSM 1257 / FGSC 987</strain>
    </source>
</reference>
<reference key="3">
    <citation type="journal article" date="1978" name="Mol. Gen. Genet.">
        <title>Sterol content and enzyme defects of nystatin-resistant mutants of Neurospora crassa.</title>
        <authorList>
            <person name="Grindle M."/>
            <person name="Farrow R."/>
        </authorList>
    </citation>
    <scope>FUNCTION</scope>
</reference>
<reference key="4">
    <citation type="journal article" date="1991" name="Biochem. Soc. Trans.">
        <title>RIP (repeat induced point mutation) as a tool in the analysis of P-450 and sterol biosynthesis in Neurospora crassa.</title>
        <authorList>
            <person name="Connerton I.F."/>
            <person name="Deane S.M."/>
            <person name="Butters J.A."/>
            <person name="Loeffler R.S."/>
            <person name="Hollomon D.W."/>
        </authorList>
    </citation>
    <scope>FUNCTION</scope>
    <scope>PATHWAY</scope>
</reference>
<name>ERG6_NEUCR</name>
<feature type="chain" id="PRO_0000124795" description="Sterol 24-C-methyltransferase erg-4">
    <location>
        <begin position="1"/>
        <end position="379"/>
    </location>
</feature>
<organism>
    <name type="scientific">Neurospora crassa (strain ATCC 24698 / 74-OR23-1A / CBS 708.71 / DSM 1257 / FGSC 987)</name>
    <dbReference type="NCBI Taxonomy" id="367110"/>
    <lineage>
        <taxon>Eukaryota</taxon>
        <taxon>Fungi</taxon>
        <taxon>Dikarya</taxon>
        <taxon>Ascomycota</taxon>
        <taxon>Pezizomycotina</taxon>
        <taxon>Sordariomycetes</taxon>
        <taxon>Sordariomycetidae</taxon>
        <taxon>Sordariales</taxon>
        <taxon>Sordariaceae</taxon>
        <taxon>Neurospora</taxon>
    </lineage>
</organism>
<keyword id="KW-0444">Lipid biosynthesis</keyword>
<keyword id="KW-0443">Lipid metabolism</keyword>
<keyword id="KW-0489">Methyltransferase</keyword>
<keyword id="KW-1185">Reference proteome</keyword>
<keyword id="KW-0949">S-adenosyl-L-methionine</keyword>
<keyword id="KW-0752">Steroid biosynthesis</keyword>
<keyword id="KW-0753">Steroid metabolism</keyword>
<keyword id="KW-0756">Sterol biosynthesis</keyword>
<keyword id="KW-1207">Sterol metabolism</keyword>
<keyword id="KW-0808">Transferase</keyword>
<dbReference type="EC" id="2.1.1.-" evidence="4"/>
<dbReference type="EMBL" id="AL389890">
    <property type="protein sequence ID" value="CAB97289.1"/>
    <property type="molecule type" value="Genomic_DNA"/>
</dbReference>
<dbReference type="EMBL" id="CM002236">
    <property type="protein sequence ID" value="EAA36156.1"/>
    <property type="molecule type" value="Genomic_DNA"/>
</dbReference>
<dbReference type="PIR" id="T50969">
    <property type="entry name" value="T50969"/>
</dbReference>
<dbReference type="RefSeq" id="XP_965392.1">
    <property type="nucleotide sequence ID" value="XM_960299.3"/>
</dbReference>
<dbReference type="SMR" id="Q9P3R1"/>
<dbReference type="FunCoup" id="Q9P3R1">
    <property type="interactions" value="288"/>
</dbReference>
<dbReference type="STRING" id="367110.Q9P3R1"/>
<dbReference type="PaxDb" id="5141-EFNCRP00000002261"/>
<dbReference type="EnsemblFungi" id="EAA36156">
    <property type="protein sequence ID" value="EAA36156"/>
    <property type="gene ID" value="NCU03006"/>
</dbReference>
<dbReference type="GeneID" id="3881542"/>
<dbReference type="KEGG" id="ncr:NCU03006"/>
<dbReference type="VEuPathDB" id="FungiDB:NCU03006"/>
<dbReference type="HOGENOM" id="CLU_039068_5_3_1"/>
<dbReference type="InParanoid" id="Q9P3R1"/>
<dbReference type="OMA" id="AFNKAMH"/>
<dbReference type="OrthoDB" id="540004at2759"/>
<dbReference type="UniPathway" id="UPA00768"/>
<dbReference type="Proteomes" id="UP000001805">
    <property type="component" value="Chromosome 1, Linkage Group I"/>
</dbReference>
<dbReference type="GO" id="GO:0005783">
    <property type="term" value="C:endoplasmic reticulum"/>
    <property type="evidence" value="ECO:0000318"/>
    <property type="project" value="GO_Central"/>
</dbReference>
<dbReference type="GO" id="GO:0005811">
    <property type="term" value="C:lipid droplet"/>
    <property type="evidence" value="ECO:0007669"/>
    <property type="project" value="EnsemblFungi"/>
</dbReference>
<dbReference type="GO" id="GO:0042802">
    <property type="term" value="F:identical protein binding"/>
    <property type="evidence" value="ECO:0007669"/>
    <property type="project" value="EnsemblFungi"/>
</dbReference>
<dbReference type="GO" id="GO:0003838">
    <property type="term" value="F:sterol 24-C-methyltransferase activity"/>
    <property type="evidence" value="ECO:0000318"/>
    <property type="project" value="GO_Central"/>
</dbReference>
<dbReference type="GO" id="GO:0006696">
    <property type="term" value="P:ergosterol biosynthetic process"/>
    <property type="evidence" value="ECO:0000318"/>
    <property type="project" value="GO_Central"/>
</dbReference>
<dbReference type="GO" id="GO:0032259">
    <property type="term" value="P:methylation"/>
    <property type="evidence" value="ECO:0007669"/>
    <property type="project" value="UniProtKB-KW"/>
</dbReference>
<dbReference type="CDD" id="cd02440">
    <property type="entry name" value="AdoMet_MTases"/>
    <property type="match status" value="1"/>
</dbReference>
<dbReference type="FunFam" id="3.40.50.150:FF:000121">
    <property type="entry name" value="Sterol 24-C-methyltransferase"/>
    <property type="match status" value="1"/>
</dbReference>
<dbReference type="Gene3D" id="3.40.50.150">
    <property type="entry name" value="Vaccinia Virus protein VP39"/>
    <property type="match status" value="1"/>
</dbReference>
<dbReference type="InterPro" id="IPR050447">
    <property type="entry name" value="Erg6_SMT_methyltransf"/>
</dbReference>
<dbReference type="InterPro" id="IPR013216">
    <property type="entry name" value="Methyltransf_11"/>
</dbReference>
<dbReference type="InterPro" id="IPR030384">
    <property type="entry name" value="MeTrfase_SMT"/>
</dbReference>
<dbReference type="InterPro" id="IPR029063">
    <property type="entry name" value="SAM-dependent_MTases_sf"/>
</dbReference>
<dbReference type="InterPro" id="IPR013705">
    <property type="entry name" value="Sterol_MeTrfase_C"/>
</dbReference>
<dbReference type="PANTHER" id="PTHR44068:SF1">
    <property type="entry name" value="HYPOTHETICAL LOC100005854"/>
    <property type="match status" value="1"/>
</dbReference>
<dbReference type="PANTHER" id="PTHR44068">
    <property type="entry name" value="ZGC:194242"/>
    <property type="match status" value="1"/>
</dbReference>
<dbReference type="Pfam" id="PF08241">
    <property type="entry name" value="Methyltransf_11"/>
    <property type="match status" value="1"/>
</dbReference>
<dbReference type="Pfam" id="PF08498">
    <property type="entry name" value="Sterol_MT_C"/>
    <property type="match status" value="1"/>
</dbReference>
<dbReference type="SUPFAM" id="SSF53335">
    <property type="entry name" value="S-adenosyl-L-methionine-dependent methyltransferases"/>
    <property type="match status" value="1"/>
</dbReference>
<dbReference type="PROSITE" id="PS51685">
    <property type="entry name" value="SAM_MT_ERG6_SMT"/>
    <property type="match status" value="1"/>
</dbReference>
<evidence type="ECO:0000255" key="1">
    <source>
        <dbReference type="PROSITE-ProRule" id="PRU01022"/>
    </source>
</evidence>
<evidence type="ECO:0000269" key="2">
    <source>
    </source>
</evidence>
<evidence type="ECO:0000303" key="3">
    <source>
    </source>
</evidence>
<evidence type="ECO:0000305" key="4">
    <source>
    </source>
</evidence>
<evidence type="ECO:0000305" key="5">
    <source>
    </source>
</evidence>
<sequence>MPSTIALEKEDHQRDAEFKKVMHGDSAKAAGGVAALLKKNTEAQQIAVDEYFKHFDNKTAEAETQADREARTKEYATLTRHYYNLATDIYEYGWGQCFHFCRYSPGESFYQAIARHEHYLAAQIGIKKDMKVLDVGCGVGGPAREIAKFTDAHITGLNNNDYQIDRATHYAVRDGLSGQLKFVKGDFMQMSFPDNSFDAVYAIEATVHAPKLEGVYGEIYRVLKPGGTFGVYEWLMTDNYDNDNVEHRDIRLAIEVGNGISNMVTISEGLAAMKNVGFELVHHEDLADRNDPMPWYWPIAGELRYMQSYLDFFTVVRMTHTARRILHGFAGILETVGLAPKGTKKTADALARGADGLVAGAKKKLFTPMYLMVGKKPLN</sequence>
<gene>
    <name evidence="3" type="primary">erg-4</name>
    <name type="ORF">B24P7.240</name>
    <name type="ORF">NCU03006</name>
</gene>